<evidence type="ECO:0000255" key="1">
    <source>
        <dbReference type="HAMAP-Rule" id="MF_00420"/>
    </source>
</evidence>
<evidence type="ECO:0000256" key="2">
    <source>
        <dbReference type="SAM" id="MobiDB-lite"/>
    </source>
</evidence>
<protein>
    <recommendedName>
        <fullName evidence="1">Phosphoribosylformylglycinamidine synthase subunit PurL</fullName>
        <shortName evidence="1">FGAM synthase</shortName>
        <ecNumber evidence="1">6.3.5.3</ecNumber>
    </recommendedName>
    <alternativeName>
        <fullName evidence="1">Formylglycinamide ribonucleotide amidotransferase subunit II</fullName>
        <shortName evidence="1">FGAR amidotransferase II</shortName>
        <shortName evidence="1">FGAR-AT II</shortName>
    </alternativeName>
    <alternativeName>
        <fullName evidence="1">Glutamine amidotransferase PurL</fullName>
    </alternativeName>
    <alternativeName>
        <fullName evidence="1">Phosphoribosylformylglycinamidine synthase subunit II</fullName>
    </alternativeName>
</protein>
<comment type="function">
    <text evidence="1">Part of the phosphoribosylformylglycinamidine synthase complex involved in the purines biosynthetic pathway. Catalyzes the ATP-dependent conversion of formylglycinamide ribonucleotide (FGAR) and glutamine to yield formylglycinamidine ribonucleotide (FGAM) and glutamate. The FGAM synthase complex is composed of three subunits. PurQ produces an ammonia molecule by converting glutamine to glutamate. PurL transfers the ammonia molecule to FGAR to form FGAM in an ATP-dependent manner. PurS interacts with PurQ and PurL and is thought to assist in the transfer of the ammonia molecule from PurQ to PurL.</text>
</comment>
<comment type="catalytic activity">
    <reaction evidence="1">
        <text>N(2)-formyl-N(1)-(5-phospho-beta-D-ribosyl)glycinamide + L-glutamine + ATP + H2O = 2-formamido-N(1)-(5-O-phospho-beta-D-ribosyl)acetamidine + L-glutamate + ADP + phosphate + H(+)</text>
        <dbReference type="Rhea" id="RHEA:17129"/>
        <dbReference type="ChEBI" id="CHEBI:15377"/>
        <dbReference type="ChEBI" id="CHEBI:15378"/>
        <dbReference type="ChEBI" id="CHEBI:29985"/>
        <dbReference type="ChEBI" id="CHEBI:30616"/>
        <dbReference type="ChEBI" id="CHEBI:43474"/>
        <dbReference type="ChEBI" id="CHEBI:58359"/>
        <dbReference type="ChEBI" id="CHEBI:147286"/>
        <dbReference type="ChEBI" id="CHEBI:147287"/>
        <dbReference type="ChEBI" id="CHEBI:456216"/>
        <dbReference type="EC" id="6.3.5.3"/>
    </reaction>
</comment>
<comment type="pathway">
    <text evidence="1">Purine metabolism; IMP biosynthesis via de novo pathway; 5-amino-1-(5-phospho-D-ribosyl)imidazole from N(2)-formyl-N(1)-(5-phospho-D-ribosyl)glycinamide: step 1/2.</text>
</comment>
<comment type="subunit">
    <text evidence="1">Monomer. Part of the FGAM synthase complex composed of 1 PurL, 1 PurQ and 2 PurS subunits.</text>
</comment>
<comment type="subcellular location">
    <subcellularLocation>
        <location evidence="1">Cytoplasm</location>
    </subcellularLocation>
</comment>
<comment type="similarity">
    <text evidence="1">Belongs to the FGAMS family.</text>
</comment>
<proteinExistence type="inferred from homology"/>
<name>PURL_CALS4</name>
<organism>
    <name type="scientific">Caldanaerobacter subterraneus subsp. tengcongensis (strain DSM 15242 / JCM 11007 / NBRC 100824 / MB4)</name>
    <name type="common">Thermoanaerobacter tengcongensis</name>
    <dbReference type="NCBI Taxonomy" id="273068"/>
    <lineage>
        <taxon>Bacteria</taxon>
        <taxon>Bacillati</taxon>
        <taxon>Bacillota</taxon>
        <taxon>Clostridia</taxon>
        <taxon>Thermoanaerobacterales</taxon>
        <taxon>Thermoanaerobacteraceae</taxon>
        <taxon>Caldanaerobacter</taxon>
    </lineage>
</organism>
<keyword id="KW-0067">ATP-binding</keyword>
<keyword id="KW-0963">Cytoplasm</keyword>
<keyword id="KW-0436">Ligase</keyword>
<keyword id="KW-0460">Magnesium</keyword>
<keyword id="KW-0479">Metal-binding</keyword>
<keyword id="KW-0547">Nucleotide-binding</keyword>
<keyword id="KW-0658">Purine biosynthesis</keyword>
<keyword id="KW-1185">Reference proteome</keyword>
<sequence length="733" mass="80476">MNKIWRELGLTDEEYEKIISILGREPNITELGMYSVMWSEHCSYKNSKPLLKYLPTKGERVIQGPGENAGVLDIGDNLAVVMKIESHNHPSAIEPYQGAATGVGGIIRDIFTMGARPIALLDSLRFGIPDDKRTKYLIENVVAGIADYGNCIGIPTVGGDTYFEESYKGNPLVNAMCVGIVEKDKIKKGIAKGIGNPVMVVGATTGRDGIGGASFASQELSEESEEKRPSVQVGDPFMEKLLLEACLELFETDAVVAIQDMGAAGLTSSSCEMASRGGVGMEIDLDKVPLREEGMTPYEIMLSESQERMLVVVKKGKEEDVQKIFKKWGLNAATIGKITDDGMIRVIKDGKIVAEVPAKSLTEDAPQYVREEEVPKWQEEVKKLDINEVKPPEDMNKVLKDVISSLNIASKEWIYSQYDYMVRTDTVITPGMDAAVVRIKGTRKAIALTTDCNGRYCYLDPYIGSQIAVAEAARNLCMVGAKPIGVTDCLNFGNPEKKEIYWQLKNSIFGIAKACETFQIPVVSGNVSLYNENEGEAIYPTPVIGMAGLIEDVSKICTMDFKKERDVIIILGENKGEIGGSEYLKVCFGMVKGQPPQIDLEKEKRLQELVLKLIDEGLINSSHDISEGGFAAALVESAIAGKKGAKISLQTSLRADIELFSESQSRALITVSPEKVDEVLKIAYEHQVPAQKVGVVEGKDIVIDVNGKRIIDLPLEVLEESWRGRIKWEMERN</sequence>
<gene>
    <name evidence="1" type="primary">purL</name>
    <name type="synonym">purL2</name>
    <name type="ordered locus">TTE0811</name>
</gene>
<accession>Q8RBK5</accession>
<reference key="1">
    <citation type="journal article" date="2002" name="Genome Res.">
        <title>A complete sequence of the T. tengcongensis genome.</title>
        <authorList>
            <person name="Bao Q."/>
            <person name="Tian Y."/>
            <person name="Li W."/>
            <person name="Xu Z."/>
            <person name="Xuan Z."/>
            <person name="Hu S."/>
            <person name="Dong W."/>
            <person name="Yang J."/>
            <person name="Chen Y."/>
            <person name="Xue Y."/>
            <person name="Xu Y."/>
            <person name="Lai X."/>
            <person name="Huang L."/>
            <person name="Dong X."/>
            <person name="Ma Y."/>
            <person name="Ling L."/>
            <person name="Tan H."/>
            <person name="Chen R."/>
            <person name="Wang J."/>
            <person name="Yu J."/>
            <person name="Yang H."/>
        </authorList>
    </citation>
    <scope>NUCLEOTIDE SEQUENCE [LARGE SCALE GENOMIC DNA]</scope>
    <source>
        <strain>DSM 15242 / JCM 11007 / NBRC 100824 / MB4</strain>
    </source>
</reference>
<dbReference type="EC" id="6.3.5.3" evidence="1"/>
<dbReference type="EMBL" id="AE008691">
    <property type="protein sequence ID" value="AAM24068.1"/>
    <property type="molecule type" value="Genomic_DNA"/>
</dbReference>
<dbReference type="RefSeq" id="WP_011025205.1">
    <property type="nucleotide sequence ID" value="NC_003869.1"/>
</dbReference>
<dbReference type="SMR" id="Q8RBK5"/>
<dbReference type="STRING" id="273068.TTE0811"/>
<dbReference type="KEGG" id="tte:TTE0811"/>
<dbReference type="eggNOG" id="COG0046">
    <property type="taxonomic scope" value="Bacteria"/>
</dbReference>
<dbReference type="HOGENOM" id="CLU_003100_0_1_9"/>
<dbReference type="OrthoDB" id="9804441at2"/>
<dbReference type="UniPathway" id="UPA00074">
    <property type="reaction ID" value="UER00128"/>
</dbReference>
<dbReference type="Proteomes" id="UP000000555">
    <property type="component" value="Chromosome"/>
</dbReference>
<dbReference type="GO" id="GO:0005737">
    <property type="term" value="C:cytoplasm"/>
    <property type="evidence" value="ECO:0007669"/>
    <property type="project" value="UniProtKB-SubCell"/>
</dbReference>
<dbReference type="GO" id="GO:0005524">
    <property type="term" value="F:ATP binding"/>
    <property type="evidence" value="ECO:0007669"/>
    <property type="project" value="UniProtKB-UniRule"/>
</dbReference>
<dbReference type="GO" id="GO:0000287">
    <property type="term" value="F:magnesium ion binding"/>
    <property type="evidence" value="ECO:0007669"/>
    <property type="project" value="UniProtKB-UniRule"/>
</dbReference>
<dbReference type="GO" id="GO:0004642">
    <property type="term" value="F:phosphoribosylformylglycinamidine synthase activity"/>
    <property type="evidence" value="ECO:0007669"/>
    <property type="project" value="UniProtKB-UniRule"/>
</dbReference>
<dbReference type="GO" id="GO:0006189">
    <property type="term" value="P:'de novo' IMP biosynthetic process"/>
    <property type="evidence" value="ECO:0007669"/>
    <property type="project" value="UniProtKB-UniRule"/>
</dbReference>
<dbReference type="CDD" id="cd02203">
    <property type="entry name" value="PurL_repeat1"/>
    <property type="match status" value="1"/>
</dbReference>
<dbReference type="CDD" id="cd02204">
    <property type="entry name" value="PurL_repeat2"/>
    <property type="match status" value="1"/>
</dbReference>
<dbReference type="FunFam" id="3.30.1330.10:FF:000004">
    <property type="entry name" value="Phosphoribosylformylglycinamidine synthase subunit PurL"/>
    <property type="match status" value="1"/>
</dbReference>
<dbReference type="FunFam" id="3.90.650.10:FF:000009">
    <property type="entry name" value="Phosphoribosylformylglycinamidine synthase subunit PurL"/>
    <property type="match status" value="1"/>
</dbReference>
<dbReference type="Gene3D" id="3.90.650.10">
    <property type="entry name" value="PurM-like C-terminal domain"/>
    <property type="match status" value="2"/>
</dbReference>
<dbReference type="Gene3D" id="3.30.1330.10">
    <property type="entry name" value="PurM-like, N-terminal domain"/>
    <property type="match status" value="2"/>
</dbReference>
<dbReference type="HAMAP" id="MF_00420">
    <property type="entry name" value="PurL_2"/>
    <property type="match status" value="1"/>
</dbReference>
<dbReference type="InterPro" id="IPR010074">
    <property type="entry name" value="PRibForGlyAmidine_synth_PurL"/>
</dbReference>
<dbReference type="InterPro" id="IPR041609">
    <property type="entry name" value="PurL_linker"/>
</dbReference>
<dbReference type="InterPro" id="IPR010918">
    <property type="entry name" value="PurM-like_C_dom"/>
</dbReference>
<dbReference type="InterPro" id="IPR036676">
    <property type="entry name" value="PurM-like_C_sf"/>
</dbReference>
<dbReference type="InterPro" id="IPR016188">
    <property type="entry name" value="PurM-like_N"/>
</dbReference>
<dbReference type="InterPro" id="IPR036921">
    <property type="entry name" value="PurM-like_N_sf"/>
</dbReference>
<dbReference type="NCBIfam" id="TIGR01736">
    <property type="entry name" value="FGAM_synth_II"/>
    <property type="match status" value="1"/>
</dbReference>
<dbReference type="NCBIfam" id="NF002290">
    <property type="entry name" value="PRK01213.1"/>
    <property type="match status" value="1"/>
</dbReference>
<dbReference type="PANTHER" id="PTHR43555">
    <property type="entry name" value="PHOSPHORIBOSYLFORMYLGLYCINAMIDINE SYNTHASE SUBUNIT PURL"/>
    <property type="match status" value="1"/>
</dbReference>
<dbReference type="PANTHER" id="PTHR43555:SF1">
    <property type="entry name" value="PHOSPHORIBOSYLFORMYLGLYCINAMIDINE SYNTHASE SUBUNIT PURL"/>
    <property type="match status" value="1"/>
</dbReference>
<dbReference type="Pfam" id="PF00586">
    <property type="entry name" value="AIRS"/>
    <property type="match status" value="2"/>
</dbReference>
<dbReference type="Pfam" id="PF02769">
    <property type="entry name" value="AIRS_C"/>
    <property type="match status" value="2"/>
</dbReference>
<dbReference type="Pfam" id="PF18072">
    <property type="entry name" value="FGAR-AT_linker"/>
    <property type="match status" value="1"/>
</dbReference>
<dbReference type="PIRSF" id="PIRSF001587">
    <property type="entry name" value="FGAM_synthase_II"/>
    <property type="match status" value="1"/>
</dbReference>
<dbReference type="SUPFAM" id="SSF56042">
    <property type="entry name" value="PurM C-terminal domain-like"/>
    <property type="match status" value="2"/>
</dbReference>
<dbReference type="SUPFAM" id="SSF55326">
    <property type="entry name" value="PurM N-terminal domain-like"/>
    <property type="match status" value="2"/>
</dbReference>
<feature type="chain" id="PRO_0000100504" description="Phosphoribosylformylglycinamidine synthase subunit PurL">
    <location>
        <begin position="1"/>
        <end position="733"/>
    </location>
</feature>
<feature type="region of interest" description="Disordered" evidence="2">
    <location>
        <begin position="212"/>
        <end position="232"/>
    </location>
</feature>
<feature type="active site" evidence="1">
    <location>
        <position position="41"/>
    </location>
</feature>
<feature type="active site" description="Proton acceptor" evidence="1">
    <location>
        <position position="87"/>
    </location>
</feature>
<feature type="binding site" evidence="1">
    <location>
        <position position="44"/>
    </location>
    <ligand>
        <name>ATP</name>
        <dbReference type="ChEBI" id="CHEBI:30616"/>
    </ligand>
</feature>
<feature type="binding site" evidence="1">
    <location>
        <position position="83"/>
    </location>
    <ligand>
        <name>ATP</name>
        <dbReference type="ChEBI" id="CHEBI:30616"/>
    </ligand>
</feature>
<feature type="binding site" evidence="1">
    <location>
        <position position="85"/>
    </location>
    <ligand>
        <name>Mg(2+)</name>
        <dbReference type="ChEBI" id="CHEBI:18420"/>
        <label>1</label>
    </ligand>
</feature>
<feature type="binding site" evidence="1">
    <location>
        <begin position="86"/>
        <end position="89"/>
    </location>
    <ligand>
        <name>substrate</name>
    </ligand>
</feature>
<feature type="binding site" evidence="1">
    <location>
        <position position="108"/>
    </location>
    <ligand>
        <name>substrate</name>
    </ligand>
</feature>
<feature type="binding site" evidence="1">
    <location>
        <position position="109"/>
    </location>
    <ligand>
        <name>Mg(2+)</name>
        <dbReference type="ChEBI" id="CHEBI:18420"/>
        <label>2</label>
    </ligand>
</feature>
<feature type="binding site" evidence="1">
    <location>
        <position position="232"/>
    </location>
    <ligand>
        <name>substrate</name>
    </ligand>
</feature>
<feature type="binding site" evidence="1">
    <location>
        <position position="260"/>
    </location>
    <ligand>
        <name>Mg(2+)</name>
        <dbReference type="ChEBI" id="CHEBI:18420"/>
        <label>2</label>
    </ligand>
</feature>
<feature type="binding site" evidence="1">
    <location>
        <begin position="304"/>
        <end position="306"/>
    </location>
    <ligand>
        <name>substrate</name>
    </ligand>
</feature>
<feature type="binding site" evidence="1">
    <location>
        <position position="488"/>
    </location>
    <ligand>
        <name>ATP</name>
        <dbReference type="ChEBI" id="CHEBI:30616"/>
    </ligand>
</feature>
<feature type="binding site" evidence="1">
    <location>
        <position position="525"/>
    </location>
    <ligand>
        <name>ATP</name>
        <dbReference type="ChEBI" id="CHEBI:30616"/>
    </ligand>
</feature>
<feature type="binding site" evidence="1">
    <location>
        <position position="526"/>
    </location>
    <ligand>
        <name>Mg(2+)</name>
        <dbReference type="ChEBI" id="CHEBI:18420"/>
        <label>1</label>
    </ligand>
</feature>
<feature type="binding site" evidence="1">
    <location>
        <position position="528"/>
    </location>
    <ligand>
        <name>substrate</name>
    </ligand>
</feature>